<dbReference type="EC" id="5.1.1.1" evidence="1"/>
<dbReference type="EMBL" id="CP000873">
    <property type="protein sequence ID" value="ABX64090.1"/>
    <property type="molecule type" value="Genomic_DNA"/>
</dbReference>
<dbReference type="SMR" id="A9MCK3"/>
<dbReference type="KEGG" id="bcs:BCAN_B0942"/>
<dbReference type="HOGENOM" id="CLU_028393_1_1_5"/>
<dbReference type="UniPathway" id="UPA00042">
    <property type="reaction ID" value="UER00497"/>
</dbReference>
<dbReference type="Proteomes" id="UP000001385">
    <property type="component" value="Chromosome II"/>
</dbReference>
<dbReference type="GO" id="GO:0005829">
    <property type="term" value="C:cytosol"/>
    <property type="evidence" value="ECO:0007669"/>
    <property type="project" value="TreeGrafter"/>
</dbReference>
<dbReference type="GO" id="GO:0008784">
    <property type="term" value="F:alanine racemase activity"/>
    <property type="evidence" value="ECO:0007669"/>
    <property type="project" value="UniProtKB-UniRule"/>
</dbReference>
<dbReference type="GO" id="GO:0030170">
    <property type="term" value="F:pyridoxal phosphate binding"/>
    <property type="evidence" value="ECO:0007669"/>
    <property type="project" value="UniProtKB-UniRule"/>
</dbReference>
<dbReference type="GO" id="GO:0030632">
    <property type="term" value="P:D-alanine biosynthetic process"/>
    <property type="evidence" value="ECO:0007669"/>
    <property type="project" value="UniProtKB-UniRule"/>
</dbReference>
<dbReference type="CDD" id="cd00430">
    <property type="entry name" value="PLPDE_III_AR"/>
    <property type="match status" value="1"/>
</dbReference>
<dbReference type="Gene3D" id="3.20.20.10">
    <property type="entry name" value="Alanine racemase"/>
    <property type="match status" value="1"/>
</dbReference>
<dbReference type="Gene3D" id="2.40.37.10">
    <property type="entry name" value="Lyase, Ornithine Decarboxylase, Chain A, domain 1"/>
    <property type="match status" value="1"/>
</dbReference>
<dbReference type="HAMAP" id="MF_01201">
    <property type="entry name" value="Ala_racemase"/>
    <property type="match status" value="1"/>
</dbReference>
<dbReference type="InterPro" id="IPR000821">
    <property type="entry name" value="Ala_racemase"/>
</dbReference>
<dbReference type="InterPro" id="IPR009006">
    <property type="entry name" value="Ala_racemase/Decarboxylase_C"/>
</dbReference>
<dbReference type="InterPro" id="IPR011079">
    <property type="entry name" value="Ala_racemase_C"/>
</dbReference>
<dbReference type="InterPro" id="IPR001608">
    <property type="entry name" value="Ala_racemase_N"/>
</dbReference>
<dbReference type="InterPro" id="IPR020622">
    <property type="entry name" value="Ala_racemase_pyridoxalP-BS"/>
</dbReference>
<dbReference type="InterPro" id="IPR029066">
    <property type="entry name" value="PLP-binding_barrel"/>
</dbReference>
<dbReference type="NCBIfam" id="TIGR00492">
    <property type="entry name" value="alr"/>
    <property type="match status" value="1"/>
</dbReference>
<dbReference type="PANTHER" id="PTHR30511">
    <property type="entry name" value="ALANINE RACEMASE"/>
    <property type="match status" value="1"/>
</dbReference>
<dbReference type="PANTHER" id="PTHR30511:SF0">
    <property type="entry name" value="ALANINE RACEMASE, CATABOLIC-RELATED"/>
    <property type="match status" value="1"/>
</dbReference>
<dbReference type="Pfam" id="PF00842">
    <property type="entry name" value="Ala_racemase_C"/>
    <property type="match status" value="1"/>
</dbReference>
<dbReference type="Pfam" id="PF01168">
    <property type="entry name" value="Ala_racemase_N"/>
    <property type="match status" value="1"/>
</dbReference>
<dbReference type="PRINTS" id="PR00992">
    <property type="entry name" value="ALARACEMASE"/>
</dbReference>
<dbReference type="SMART" id="SM01005">
    <property type="entry name" value="Ala_racemase_C"/>
    <property type="match status" value="1"/>
</dbReference>
<dbReference type="SUPFAM" id="SSF50621">
    <property type="entry name" value="Alanine racemase C-terminal domain-like"/>
    <property type="match status" value="1"/>
</dbReference>
<dbReference type="SUPFAM" id="SSF51419">
    <property type="entry name" value="PLP-binding barrel"/>
    <property type="match status" value="1"/>
</dbReference>
<dbReference type="PROSITE" id="PS00395">
    <property type="entry name" value="ALANINE_RACEMASE"/>
    <property type="match status" value="1"/>
</dbReference>
<name>ALR_BRUC2</name>
<evidence type="ECO:0000255" key="1">
    <source>
        <dbReference type="HAMAP-Rule" id="MF_01201"/>
    </source>
</evidence>
<comment type="function">
    <text evidence="1">Catalyzes the interconversion of L-alanine and D-alanine. May also act on other amino acids.</text>
</comment>
<comment type="catalytic activity">
    <reaction evidence="1">
        <text>L-alanine = D-alanine</text>
        <dbReference type="Rhea" id="RHEA:20249"/>
        <dbReference type="ChEBI" id="CHEBI:57416"/>
        <dbReference type="ChEBI" id="CHEBI:57972"/>
        <dbReference type="EC" id="5.1.1.1"/>
    </reaction>
</comment>
<comment type="cofactor">
    <cofactor evidence="1">
        <name>pyridoxal 5'-phosphate</name>
        <dbReference type="ChEBI" id="CHEBI:597326"/>
    </cofactor>
</comment>
<comment type="pathway">
    <text evidence="1">Amino-acid biosynthesis; D-alanine biosynthesis; D-alanine from L-alanine: step 1/1.</text>
</comment>
<comment type="similarity">
    <text evidence="1">Belongs to the alanine racemase family.</text>
</comment>
<organism>
    <name type="scientific">Brucella canis (strain ATCC 23365 / NCTC 10854 / RM-666)</name>
    <dbReference type="NCBI Taxonomy" id="483179"/>
    <lineage>
        <taxon>Bacteria</taxon>
        <taxon>Pseudomonadati</taxon>
        <taxon>Pseudomonadota</taxon>
        <taxon>Alphaproteobacteria</taxon>
        <taxon>Hyphomicrobiales</taxon>
        <taxon>Brucellaceae</taxon>
        <taxon>Brucella/Ochrobactrum group</taxon>
        <taxon>Brucella</taxon>
    </lineage>
</organism>
<feature type="chain" id="PRO_1000085497" description="Alanine racemase">
    <location>
        <begin position="1"/>
        <end position="396"/>
    </location>
</feature>
<feature type="active site" description="Proton acceptor; specific for D-alanine" evidence="1">
    <location>
        <position position="46"/>
    </location>
</feature>
<feature type="active site" description="Proton acceptor; specific for L-alanine" evidence="1">
    <location>
        <position position="280"/>
    </location>
</feature>
<feature type="binding site" evidence="1">
    <location>
        <position position="145"/>
    </location>
    <ligand>
        <name>substrate</name>
    </ligand>
</feature>
<feature type="binding site" evidence="1">
    <location>
        <position position="328"/>
    </location>
    <ligand>
        <name>substrate</name>
    </ligand>
</feature>
<feature type="modified residue" description="N6-(pyridoxal phosphate)lysine" evidence="1">
    <location>
        <position position="46"/>
    </location>
</feature>
<keyword id="KW-0413">Isomerase</keyword>
<keyword id="KW-0663">Pyridoxal phosphate</keyword>
<keyword id="KW-1185">Reference proteome</keyword>
<protein>
    <recommendedName>
        <fullName evidence="1">Alanine racemase</fullName>
        <ecNumber evidence="1">5.1.1.1</ecNumber>
    </recommendedName>
</protein>
<sequence length="396" mass="42340">MSLPFSQDERDLAAGGILTIDLAALRHNYSAIATRIAPTRTAAVVKADAYGLGASRVAPAFYEAGCRDFFVAHLGEAVALKPFLKPDATLYVLNGLQPGTEAACAREGILPVLNSLEQVENWAALATRLGKKLPALLQFDTGMSRLGLSAKEFDRLLENVTLLSRIDIKFAISHLANGDEPGNAANARQLAKMTALLARLPKLPAALANSGGTFLGKTYYFDLARPGIALYGIDPERQHDFSDKVAHENKKPKHSILPVLTLSARVIQVRDVDKGATVGYGGTYVANGPMRIATIAVGYADGLFRSLSNKGAAFFGDTRLPIIGRVSMDSITLDVTSLPEGTLKLGSLVELIGPHQRLEDVARDCDTIPYEILTALGNRYARVYVYVNGGGTSTTA</sequence>
<gene>
    <name type="primary">alr</name>
    <name type="ordered locus">BCAN_B0942</name>
</gene>
<accession>A9MCK3</accession>
<reference key="1">
    <citation type="submission" date="2007-10" db="EMBL/GenBank/DDBJ databases">
        <title>Brucella canis ATCC 23365 whole genome shotgun sequencing project.</title>
        <authorList>
            <person name="Setubal J.C."/>
            <person name="Bowns C."/>
            <person name="Boyle S."/>
            <person name="Crasta O.R."/>
            <person name="Czar M.J."/>
            <person name="Dharmanolla C."/>
            <person name="Gillespie J.J."/>
            <person name="Kenyon R.W."/>
            <person name="Lu J."/>
            <person name="Mane S."/>
            <person name="Mohapatra S."/>
            <person name="Nagrani S."/>
            <person name="Purkayastha A."/>
            <person name="Rajasimha H.K."/>
            <person name="Shallom J.M."/>
            <person name="Shallom S."/>
            <person name="Shukla M."/>
            <person name="Snyder E.E."/>
            <person name="Sobral B.W."/>
            <person name="Wattam A.R."/>
            <person name="Will R."/>
            <person name="Williams K."/>
            <person name="Yoo H."/>
            <person name="Bruce D."/>
            <person name="Detter C."/>
            <person name="Munk C."/>
            <person name="Brettin T.S."/>
        </authorList>
    </citation>
    <scope>NUCLEOTIDE SEQUENCE [LARGE SCALE GENOMIC DNA]</scope>
    <source>
        <strain>ATCC 23365 / NCTC 10854 / RM-666</strain>
    </source>
</reference>
<proteinExistence type="inferred from homology"/>